<evidence type="ECO:0000255" key="1">
    <source>
        <dbReference type="HAMAP-Rule" id="MF_00131"/>
    </source>
</evidence>
<reference key="1">
    <citation type="submission" date="2006-03" db="EMBL/GenBank/DDBJ databases">
        <title>Complete sequence of chromosome of Psychrobacter cryohalolentis K5.</title>
        <authorList>
            <consortium name="US DOE Joint Genome Institute"/>
            <person name="Copeland A."/>
            <person name="Lucas S."/>
            <person name="Lapidus A."/>
            <person name="Barry K."/>
            <person name="Detter J.C."/>
            <person name="Glavina T."/>
            <person name="Hammon N."/>
            <person name="Israni S."/>
            <person name="Dalin E."/>
            <person name="Tice H."/>
            <person name="Pitluck S."/>
            <person name="Brettin T."/>
            <person name="Bruce D."/>
            <person name="Han C."/>
            <person name="Tapia R."/>
            <person name="Sims D.R."/>
            <person name="Gilna P."/>
            <person name="Schmutz J."/>
            <person name="Larimer F."/>
            <person name="Land M."/>
            <person name="Hauser L."/>
            <person name="Kyrpides N."/>
            <person name="Kim E."/>
            <person name="Richardson P."/>
        </authorList>
    </citation>
    <scope>NUCLEOTIDE SEQUENCE [LARGE SCALE GENOMIC DNA]</scope>
    <source>
        <strain>ATCC BAA-1226 / DSM 17306 / VKM B-2378 / K5</strain>
    </source>
</reference>
<dbReference type="EC" id="4.2.1.20" evidence="1"/>
<dbReference type="EMBL" id="CP000323">
    <property type="protein sequence ID" value="ABE74251.1"/>
    <property type="molecule type" value="Genomic_DNA"/>
</dbReference>
<dbReference type="RefSeq" id="WP_011512836.1">
    <property type="nucleotide sequence ID" value="NC_007969.1"/>
</dbReference>
<dbReference type="SMR" id="Q1QDK2"/>
<dbReference type="STRING" id="335284.Pcryo_0468"/>
<dbReference type="KEGG" id="pcr:Pcryo_0468"/>
<dbReference type="eggNOG" id="COG0159">
    <property type="taxonomic scope" value="Bacteria"/>
</dbReference>
<dbReference type="HOGENOM" id="CLU_016734_0_0_6"/>
<dbReference type="UniPathway" id="UPA00035">
    <property type="reaction ID" value="UER00044"/>
</dbReference>
<dbReference type="Proteomes" id="UP000002425">
    <property type="component" value="Chromosome"/>
</dbReference>
<dbReference type="GO" id="GO:0005829">
    <property type="term" value="C:cytosol"/>
    <property type="evidence" value="ECO:0007669"/>
    <property type="project" value="TreeGrafter"/>
</dbReference>
<dbReference type="GO" id="GO:0004834">
    <property type="term" value="F:tryptophan synthase activity"/>
    <property type="evidence" value="ECO:0007669"/>
    <property type="project" value="UniProtKB-UniRule"/>
</dbReference>
<dbReference type="CDD" id="cd04724">
    <property type="entry name" value="Tryptophan_synthase_alpha"/>
    <property type="match status" value="1"/>
</dbReference>
<dbReference type="FunFam" id="3.20.20.70:FF:000037">
    <property type="entry name" value="Tryptophan synthase alpha chain"/>
    <property type="match status" value="1"/>
</dbReference>
<dbReference type="Gene3D" id="3.20.20.70">
    <property type="entry name" value="Aldolase class I"/>
    <property type="match status" value="1"/>
</dbReference>
<dbReference type="HAMAP" id="MF_00131">
    <property type="entry name" value="Trp_synth_alpha"/>
    <property type="match status" value="1"/>
</dbReference>
<dbReference type="InterPro" id="IPR013785">
    <property type="entry name" value="Aldolase_TIM"/>
</dbReference>
<dbReference type="InterPro" id="IPR011060">
    <property type="entry name" value="RibuloseP-bd_barrel"/>
</dbReference>
<dbReference type="InterPro" id="IPR018204">
    <property type="entry name" value="Trp_synthase_alpha_AS"/>
</dbReference>
<dbReference type="InterPro" id="IPR002028">
    <property type="entry name" value="Trp_synthase_suA"/>
</dbReference>
<dbReference type="NCBIfam" id="TIGR00262">
    <property type="entry name" value="trpA"/>
    <property type="match status" value="1"/>
</dbReference>
<dbReference type="PANTHER" id="PTHR43406:SF1">
    <property type="entry name" value="TRYPTOPHAN SYNTHASE ALPHA CHAIN, CHLOROPLASTIC"/>
    <property type="match status" value="1"/>
</dbReference>
<dbReference type="PANTHER" id="PTHR43406">
    <property type="entry name" value="TRYPTOPHAN SYNTHASE, ALPHA CHAIN"/>
    <property type="match status" value="1"/>
</dbReference>
<dbReference type="Pfam" id="PF00290">
    <property type="entry name" value="Trp_syntA"/>
    <property type="match status" value="1"/>
</dbReference>
<dbReference type="SUPFAM" id="SSF51366">
    <property type="entry name" value="Ribulose-phoshate binding barrel"/>
    <property type="match status" value="1"/>
</dbReference>
<dbReference type="PROSITE" id="PS00167">
    <property type="entry name" value="TRP_SYNTHASE_ALPHA"/>
    <property type="match status" value="1"/>
</dbReference>
<comment type="function">
    <text evidence="1">The alpha subunit is responsible for the aldol cleavage of indoleglycerol phosphate to indole and glyceraldehyde 3-phosphate.</text>
</comment>
<comment type="catalytic activity">
    <reaction evidence="1">
        <text>(1S,2R)-1-C-(indol-3-yl)glycerol 3-phosphate + L-serine = D-glyceraldehyde 3-phosphate + L-tryptophan + H2O</text>
        <dbReference type="Rhea" id="RHEA:10532"/>
        <dbReference type="ChEBI" id="CHEBI:15377"/>
        <dbReference type="ChEBI" id="CHEBI:33384"/>
        <dbReference type="ChEBI" id="CHEBI:57912"/>
        <dbReference type="ChEBI" id="CHEBI:58866"/>
        <dbReference type="ChEBI" id="CHEBI:59776"/>
        <dbReference type="EC" id="4.2.1.20"/>
    </reaction>
</comment>
<comment type="pathway">
    <text evidence="1">Amino-acid biosynthesis; L-tryptophan biosynthesis; L-tryptophan from chorismate: step 5/5.</text>
</comment>
<comment type="subunit">
    <text evidence="1">Tetramer of two alpha and two beta chains.</text>
</comment>
<comment type="similarity">
    <text evidence="1">Belongs to the TrpA family.</text>
</comment>
<organism>
    <name type="scientific">Psychrobacter cryohalolentis (strain ATCC BAA-1226 / DSM 17306 / VKM B-2378 / K5)</name>
    <dbReference type="NCBI Taxonomy" id="335284"/>
    <lineage>
        <taxon>Bacteria</taxon>
        <taxon>Pseudomonadati</taxon>
        <taxon>Pseudomonadota</taxon>
        <taxon>Gammaproteobacteria</taxon>
        <taxon>Moraxellales</taxon>
        <taxon>Moraxellaceae</taxon>
        <taxon>Psychrobacter</taxon>
    </lineage>
</organism>
<proteinExistence type="inferred from homology"/>
<accession>Q1QDK2</accession>
<gene>
    <name evidence="1" type="primary">trpA</name>
    <name type="ordered locus">Pcryo_0468</name>
</gene>
<feature type="chain" id="PRO_1000018262" description="Tryptophan synthase alpha chain">
    <location>
        <begin position="1"/>
        <end position="272"/>
    </location>
</feature>
<feature type="active site" description="Proton acceptor" evidence="1">
    <location>
        <position position="49"/>
    </location>
</feature>
<feature type="active site" description="Proton acceptor" evidence="1">
    <location>
        <position position="60"/>
    </location>
</feature>
<protein>
    <recommendedName>
        <fullName evidence="1">Tryptophan synthase alpha chain</fullName>
        <ecNumber evidence="1">4.2.1.20</ecNumber>
    </recommendedName>
</protein>
<name>TRPA_PSYCK</name>
<keyword id="KW-0028">Amino-acid biosynthesis</keyword>
<keyword id="KW-0057">Aromatic amino acid biosynthesis</keyword>
<keyword id="KW-0456">Lyase</keyword>
<keyword id="KW-0822">Tryptophan biosynthesis</keyword>
<sequence>MTRIESTFETLKAQNKKALIPYVMAGDPNPSNFVGLLHDLVKHGADMIEVGLPFSDPMADGPTVALAGERALAAGTSTRDALKMVKEFRQQDTQTPIILMGYLNPVEIIGYDNFVSLCEQSGVDGILMVDLPPAEAGSFTQHLTEHAMNEIFLLSPTTLAERRQQVLTHCGGYIYYVSLKGVTGSATLDTDDVAKQVQAIKAETDLPVCVGFGIRDATSAKAIGAHADGIIVGSALVQNFADIDANDITAVANAQQKIMAKMDELRGALDSL</sequence>